<evidence type="ECO:0000250" key="1"/>
<evidence type="ECO:0000250" key="2">
    <source>
        <dbReference type="UniProtKB" id="Q92484"/>
    </source>
</evidence>
<evidence type="ECO:0000255" key="3"/>
<evidence type="ECO:0000305" key="4"/>
<feature type="signal peptide" evidence="3">
    <location>
        <begin position="1"/>
        <end position="17"/>
    </location>
</feature>
<feature type="chain" id="PRO_0000328195" description="Sphingomyelinase phosphodiesterase D">
    <location>
        <begin position="18"/>
        <end position="438"/>
    </location>
</feature>
<feature type="binding site" evidence="2">
    <location>
        <position position="27"/>
    </location>
    <ligand>
        <name>Zn(2+)</name>
        <dbReference type="ChEBI" id="CHEBI:29105"/>
        <label>1</label>
    </ligand>
</feature>
<feature type="binding site" evidence="2">
    <location>
        <position position="29"/>
    </location>
    <ligand>
        <name>Zn(2+)</name>
        <dbReference type="ChEBI" id="CHEBI:29105"/>
        <label>1</label>
    </ligand>
</feature>
<feature type="binding site" evidence="2">
    <location>
        <position position="111"/>
    </location>
    <ligand>
        <name>Zn(2+)</name>
        <dbReference type="ChEBI" id="CHEBI:29105"/>
        <label>1</label>
    </ligand>
</feature>
<feature type="binding site" evidence="2">
    <location>
        <position position="111"/>
    </location>
    <ligand>
        <name>Zn(2+)</name>
        <dbReference type="ChEBI" id="CHEBI:29105"/>
        <label>2</label>
    </ligand>
</feature>
<feature type="binding site" evidence="2">
    <location>
        <position position="148"/>
    </location>
    <ligand>
        <name>Zn(2+)</name>
        <dbReference type="ChEBI" id="CHEBI:29105"/>
        <label>2</label>
    </ligand>
</feature>
<feature type="binding site" evidence="2">
    <location>
        <position position="247"/>
    </location>
    <ligand>
        <name>Zn(2+)</name>
        <dbReference type="ChEBI" id="CHEBI:29105"/>
        <label>2</label>
    </ligand>
</feature>
<feature type="binding site" evidence="2">
    <location>
        <position position="287"/>
    </location>
    <ligand>
        <name>Zn(2+)</name>
        <dbReference type="ChEBI" id="CHEBI:29105"/>
        <label>2</label>
    </ligand>
</feature>
<feature type="binding site" evidence="2">
    <location>
        <position position="289"/>
    </location>
    <ligand>
        <name>Zn(2+)</name>
        <dbReference type="ChEBI" id="CHEBI:29105"/>
        <label>1</label>
    </ligand>
</feature>
<feature type="glycosylation site" description="N-linked (GlcNAc...) asparagine" evidence="3">
    <location>
        <position position="40"/>
    </location>
</feature>
<feature type="glycosylation site" description="N-linked (GlcNAc...) asparagine" evidence="3">
    <location>
        <position position="160"/>
    </location>
</feature>
<feature type="glycosylation site" description="N-linked (GlcNAc...) asparagine" evidence="3">
    <location>
        <position position="271"/>
    </location>
</feature>
<feature type="glycosylation site" description="N-linked (GlcNAc...) asparagine" evidence="3">
    <location>
        <position position="338"/>
    </location>
</feature>
<feature type="glycosylation site" description="N-linked (GlcNAc...) asparagine" evidence="3">
    <location>
        <position position="359"/>
    </location>
</feature>
<accession>Q55GC7</accession>
<proteinExistence type="inferred from homology"/>
<sequence length="438" mass="49248">MKIILILVLVLVVSINALNNQFLHISDVHYSSAMNSLLYNASVMCIGPTVTKEFDHKEHEDLIEDTERLNLPTNGLYGRYGCDTNQLLLSEVISEMLNVNSNPDFIIYTGDGAGHGLPNGPWSESQSTLAKSLYGAYPNTQFIPTIGNNDVFPDYNSQCNDSNLQFLYETWAQWIPTNQVSSFLYRGSFVVSPVSGLTIISLNTILYSVKNKNTFSTPQDPCGQFAWLEQQLIAAKQAGNSVYIIGHIFPGLDPFYLQGTWKSQYQTAFFNITSDYQTTITAGFFGHIHRDEIRSIQFDNPSLTNNHYFPMFIGSSITPVYFNNPTFKQFTYDSQSKNITDITAYFSDVYISNLKGHMNWTEEYDFVSIYDIDNQYGIGGDQLNSLMERMVSSNSIFNNYDNFRSGSYLSDSPSMTCLINAATIDELNACTYIAANVA</sequence>
<name>SGMD_DICDI</name>
<reference key="1">
    <citation type="journal article" date="2005" name="Nature">
        <title>The genome of the social amoeba Dictyostelium discoideum.</title>
        <authorList>
            <person name="Eichinger L."/>
            <person name="Pachebat J.A."/>
            <person name="Gloeckner G."/>
            <person name="Rajandream M.A."/>
            <person name="Sucgang R."/>
            <person name="Berriman M."/>
            <person name="Song J."/>
            <person name="Olsen R."/>
            <person name="Szafranski K."/>
            <person name="Xu Q."/>
            <person name="Tunggal B."/>
            <person name="Kummerfeld S."/>
            <person name="Madera M."/>
            <person name="Konfortov B.A."/>
            <person name="Rivero F."/>
            <person name="Bankier A.T."/>
            <person name="Lehmann R."/>
            <person name="Hamlin N."/>
            <person name="Davies R."/>
            <person name="Gaudet P."/>
            <person name="Fey P."/>
            <person name="Pilcher K."/>
            <person name="Chen G."/>
            <person name="Saunders D."/>
            <person name="Sodergren E.J."/>
            <person name="Davis P."/>
            <person name="Kerhornou A."/>
            <person name="Nie X."/>
            <person name="Hall N."/>
            <person name="Anjard C."/>
            <person name="Hemphill L."/>
            <person name="Bason N."/>
            <person name="Farbrother P."/>
            <person name="Desany B."/>
            <person name="Just E."/>
            <person name="Morio T."/>
            <person name="Rost R."/>
            <person name="Churcher C.M."/>
            <person name="Cooper J."/>
            <person name="Haydock S."/>
            <person name="van Driessche N."/>
            <person name="Cronin A."/>
            <person name="Goodhead I."/>
            <person name="Muzny D.M."/>
            <person name="Mourier T."/>
            <person name="Pain A."/>
            <person name="Lu M."/>
            <person name="Harper D."/>
            <person name="Lindsay R."/>
            <person name="Hauser H."/>
            <person name="James K.D."/>
            <person name="Quiles M."/>
            <person name="Madan Babu M."/>
            <person name="Saito T."/>
            <person name="Buchrieser C."/>
            <person name="Wardroper A."/>
            <person name="Felder M."/>
            <person name="Thangavelu M."/>
            <person name="Johnson D."/>
            <person name="Knights A."/>
            <person name="Loulseged H."/>
            <person name="Mungall K.L."/>
            <person name="Oliver K."/>
            <person name="Price C."/>
            <person name="Quail M.A."/>
            <person name="Urushihara H."/>
            <person name="Hernandez J."/>
            <person name="Rabbinowitsch E."/>
            <person name="Steffen D."/>
            <person name="Sanders M."/>
            <person name="Ma J."/>
            <person name="Kohara Y."/>
            <person name="Sharp S."/>
            <person name="Simmonds M.N."/>
            <person name="Spiegler S."/>
            <person name="Tivey A."/>
            <person name="Sugano S."/>
            <person name="White B."/>
            <person name="Walker D."/>
            <person name="Woodward J.R."/>
            <person name="Winckler T."/>
            <person name="Tanaka Y."/>
            <person name="Shaulsky G."/>
            <person name="Schleicher M."/>
            <person name="Weinstock G.M."/>
            <person name="Rosenthal A."/>
            <person name="Cox E.C."/>
            <person name="Chisholm R.L."/>
            <person name="Gibbs R.A."/>
            <person name="Loomis W.F."/>
            <person name="Platzer M."/>
            <person name="Kay R.R."/>
            <person name="Williams J.G."/>
            <person name="Dear P.H."/>
            <person name="Noegel A.A."/>
            <person name="Barrell B.G."/>
            <person name="Kuspa A."/>
        </authorList>
    </citation>
    <scope>NUCLEOTIDE SEQUENCE [LARGE SCALE GENOMIC DNA]</scope>
    <source>
        <strain>AX4</strain>
    </source>
</reference>
<protein>
    <recommendedName>
        <fullName>Sphingomyelinase phosphodiesterase D</fullName>
        <ecNumber>3.1.4.-</ecNumber>
    </recommendedName>
    <alternativeName>
        <fullName>ASM-like phosphodiesterase D</fullName>
    </alternativeName>
</protein>
<organism>
    <name type="scientific">Dictyostelium discoideum</name>
    <name type="common">Social amoeba</name>
    <dbReference type="NCBI Taxonomy" id="44689"/>
    <lineage>
        <taxon>Eukaryota</taxon>
        <taxon>Amoebozoa</taxon>
        <taxon>Evosea</taxon>
        <taxon>Eumycetozoa</taxon>
        <taxon>Dictyostelia</taxon>
        <taxon>Dictyosteliales</taxon>
        <taxon>Dictyosteliaceae</taxon>
        <taxon>Dictyostelium</taxon>
    </lineage>
</organism>
<keyword id="KW-0325">Glycoprotein</keyword>
<keyword id="KW-0326">Glycosidase</keyword>
<keyword id="KW-0378">Hydrolase</keyword>
<keyword id="KW-0479">Metal-binding</keyword>
<keyword id="KW-1185">Reference proteome</keyword>
<keyword id="KW-0964">Secreted</keyword>
<keyword id="KW-0732">Signal</keyword>
<keyword id="KW-0862">Zinc</keyword>
<dbReference type="EC" id="3.1.4.-"/>
<dbReference type="EMBL" id="AAFI02000003">
    <property type="protein sequence ID" value="EAL73618.1"/>
    <property type="molecule type" value="Genomic_DNA"/>
</dbReference>
<dbReference type="RefSeq" id="XP_647257.1">
    <property type="nucleotide sequence ID" value="XM_642165.1"/>
</dbReference>
<dbReference type="SMR" id="Q55GC7"/>
<dbReference type="GlyCosmos" id="Q55GC7">
    <property type="glycosylation" value="5 sites, No reported glycans"/>
</dbReference>
<dbReference type="GlyGen" id="Q55GC7">
    <property type="glycosylation" value="6 sites"/>
</dbReference>
<dbReference type="PaxDb" id="44689-DDB0232051"/>
<dbReference type="EnsemblProtists" id="EAL73618">
    <property type="protein sequence ID" value="EAL73618"/>
    <property type="gene ID" value="DDB_G0268330"/>
</dbReference>
<dbReference type="GeneID" id="8616062"/>
<dbReference type="KEGG" id="ddi:DDB_G0268330"/>
<dbReference type="dictyBase" id="DDB_G0268330">
    <property type="gene designation" value="sgmD"/>
</dbReference>
<dbReference type="VEuPathDB" id="AmoebaDB:DDB_G0268330"/>
<dbReference type="eggNOG" id="KOG3770">
    <property type="taxonomic scope" value="Eukaryota"/>
</dbReference>
<dbReference type="HOGENOM" id="CLU_014743_0_2_1"/>
<dbReference type="InParanoid" id="Q55GC7"/>
<dbReference type="OMA" id="HIHRDEI"/>
<dbReference type="PhylomeDB" id="Q55GC7"/>
<dbReference type="PRO" id="PR:Q55GC7"/>
<dbReference type="Proteomes" id="UP000002195">
    <property type="component" value="Chromosome 1"/>
</dbReference>
<dbReference type="GO" id="GO:0005615">
    <property type="term" value="C:extracellular space"/>
    <property type="evidence" value="ECO:0000318"/>
    <property type="project" value="GO_Central"/>
</dbReference>
<dbReference type="GO" id="GO:0016020">
    <property type="term" value="C:membrane"/>
    <property type="evidence" value="ECO:0007669"/>
    <property type="project" value="GOC"/>
</dbReference>
<dbReference type="GO" id="GO:0016798">
    <property type="term" value="F:hydrolase activity, acting on glycosyl bonds"/>
    <property type="evidence" value="ECO:0007669"/>
    <property type="project" value="UniProtKB-KW"/>
</dbReference>
<dbReference type="GO" id="GO:0046872">
    <property type="term" value="F:metal ion binding"/>
    <property type="evidence" value="ECO:0007669"/>
    <property type="project" value="UniProtKB-KW"/>
</dbReference>
<dbReference type="GO" id="GO:0008081">
    <property type="term" value="F:phosphoric diester hydrolase activity"/>
    <property type="evidence" value="ECO:0000318"/>
    <property type="project" value="GO_Central"/>
</dbReference>
<dbReference type="GO" id="GO:0004767">
    <property type="term" value="F:sphingomyelin phosphodiesterase activity"/>
    <property type="evidence" value="ECO:0000250"/>
    <property type="project" value="dictyBase"/>
</dbReference>
<dbReference type="GO" id="GO:0046513">
    <property type="term" value="P:ceramide biosynthetic process"/>
    <property type="evidence" value="ECO:0000250"/>
    <property type="project" value="dictyBase"/>
</dbReference>
<dbReference type="GO" id="GO:0006685">
    <property type="term" value="P:sphingomyelin catabolic process"/>
    <property type="evidence" value="ECO:0000250"/>
    <property type="project" value="dictyBase"/>
</dbReference>
<dbReference type="CDD" id="cd00842">
    <property type="entry name" value="MPP_ASMase"/>
    <property type="match status" value="1"/>
</dbReference>
<dbReference type="FunFam" id="3.60.21.10:FF:000251">
    <property type="entry name" value="Sphingomyelinase phosphodiesterase D"/>
    <property type="match status" value="1"/>
</dbReference>
<dbReference type="Gene3D" id="3.60.21.10">
    <property type="match status" value="1"/>
</dbReference>
<dbReference type="InterPro" id="IPR045473">
    <property type="entry name" value="ASM_C"/>
</dbReference>
<dbReference type="InterPro" id="IPR041805">
    <property type="entry name" value="ASMase/PPN1_MPP"/>
</dbReference>
<dbReference type="InterPro" id="IPR004843">
    <property type="entry name" value="Calcineurin-like_PHP_ApaH"/>
</dbReference>
<dbReference type="InterPro" id="IPR029052">
    <property type="entry name" value="Metallo-depent_PP-like"/>
</dbReference>
<dbReference type="PANTHER" id="PTHR10340">
    <property type="entry name" value="SPHINGOMYELIN PHOSPHODIESTERASE"/>
    <property type="match status" value="1"/>
</dbReference>
<dbReference type="PANTHER" id="PTHR10340:SF53">
    <property type="entry name" value="SPHINGOMYELINASE PHOSPHODIESTERASE D"/>
    <property type="match status" value="1"/>
</dbReference>
<dbReference type="Pfam" id="PF19272">
    <property type="entry name" value="ASMase_C"/>
    <property type="match status" value="1"/>
</dbReference>
<dbReference type="Pfam" id="PF00149">
    <property type="entry name" value="Metallophos"/>
    <property type="match status" value="1"/>
</dbReference>
<dbReference type="SUPFAM" id="SSF56300">
    <property type="entry name" value="Metallo-dependent phosphatases"/>
    <property type="match status" value="1"/>
</dbReference>
<gene>
    <name type="primary">sgmD</name>
    <name type="ORF">DDB_G0268330</name>
</gene>
<comment type="cofactor">
    <cofactor evidence="2">
        <name>Zn(2+)</name>
        <dbReference type="ChEBI" id="CHEBI:29105"/>
    </cofactor>
    <text evidence="2">Binds 2 Zn(2+) per subunit.</text>
</comment>
<comment type="subcellular location">
    <subcellularLocation>
        <location evidence="1">Secreted</location>
    </subcellularLocation>
</comment>
<comment type="similarity">
    <text evidence="4">Belongs to the acid sphingomyelinase family.</text>
</comment>